<protein>
    <recommendedName>
        <fullName evidence="1">Methionine--tRNA ligase</fullName>
        <ecNumber evidence="1">6.1.1.10</ecNumber>
    </recommendedName>
    <alternativeName>
        <fullName evidence="1">Methionyl-tRNA synthetase</fullName>
        <shortName evidence="1">MetRS</shortName>
    </alternativeName>
</protein>
<proteinExistence type="inferred from homology"/>
<accession>A8MA54</accession>
<gene>
    <name evidence="1" type="primary">metG</name>
    <name type="ordered locus">Cmaq_0136</name>
</gene>
<organism>
    <name type="scientific">Caldivirga maquilingensis (strain ATCC 700844 / DSM 13496 / JCM 10307 / IC-167)</name>
    <dbReference type="NCBI Taxonomy" id="397948"/>
    <lineage>
        <taxon>Archaea</taxon>
        <taxon>Thermoproteota</taxon>
        <taxon>Thermoprotei</taxon>
        <taxon>Thermoproteales</taxon>
        <taxon>Thermoproteaceae</taxon>
        <taxon>Caldivirga</taxon>
    </lineage>
</organism>
<name>SYM_CALMQ</name>
<feature type="chain" id="PRO_0000331935" description="Methionine--tRNA ligase">
    <location>
        <begin position="1"/>
        <end position="582"/>
    </location>
</feature>
<feature type="short sequence motif" description="'HIGH' region">
    <location>
        <begin position="24"/>
        <end position="34"/>
    </location>
</feature>
<feature type="short sequence motif" description="'KMSKS' region">
    <location>
        <begin position="346"/>
        <end position="350"/>
    </location>
</feature>
<feature type="binding site" evidence="1">
    <location>
        <position position="156"/>
    </location>
    <ligand>
        <name>Zn(2+)</name>
        <dbReference type="ChEBI" id="CHEBI:29105"/>
    </ligand>
</feature>
<feature type="binding site" evidence="1">
    <location>
        <position position="159"/>
    </location>
    <ligand>
        <name>Zn(2+)</name>
        <dbReference type="ChEBI" id="CHEBI:29105"/>
    </ligand>
</feature>
<feature type="binding site" evidence="1">
    <location>
        <position position="169"/>
    </location>
    <ligand>
        <name>Zn(2+)</name>
        <dbReference type="ChEBI" id="CHEBI:29105"/>
    </ligand>
</feature>
<feature type="binding site" evidence="1">
    <location>
        <position position="172"/>
    </location>
    <ligand>
        <name>Zn(2+)</name>
        <dbReference type="ChEBI" id="CHEBI:29105"/>
    </ligand>
</feature>
<feature type="binding site" evidence="1">
    <location>
        <position position="349"/>
    </location>
    <ligand>
        <name>ATP</name>
        <dbReference type="ChEBI" id="CHEBI:30616"/>
    </ligand>
</feature>
<comment type="function">
    <text evidence="1">Is required not only for elongation of protein synthesis but also for the initiation of all mRNA translation through initiator tRNA(fMet) aminoacylation.</text>
</comment>
<comment type="catalytic activity">
    <reaction evidence="1">
        <text>tRNA(Met) + L-methionine + ATP = L-methionyl-tRNA(Met) + AMP + diphosphate</text>
        <dbReference type="Rhea" id="RHEA:13481"/>
        <dbReference type="Rhea" id="RHEA-COMP:9667"/>
        <dbReference type="Rhea" id="RHEA-COMP:9698"/>
        <dbReference type="ChEBI" id="CHEBI:30616"/>
        <dbReference type="ChEBI" id="CHEBI:33019"/>
        <dbReference type="ChEBI" id="CHEBI:57844"/>
        <dbReference type="ChEBI" id="CHEBI:78442"/>
        <dbReference type="ChEBI" id="CHEBI:78530"/>
        <dbReference type="ChEBI" id="CHEBI:456215"/>
        <dbReference type="EC" id="6.1.1.10"/>
    </reaction>
</comment>
<comment type="cofactor">
    <cofactor evidence="1">
        <name>Zn(2+)</name>
        <dbReference type="ChEBI" id="CHEBI:29105"/>
    </cofactor>
    <text evidence="1">Binds 1 zinc ion per subunit.</text>
</comment>
<comment type="subcellular location">
    <subcellularLocation>
        <location evidence="1">Cytoplasm</location>
    </subcellularLocation>
</comment>
<comment type="similarity">
    <text evidence="1">Belongs to the class-I aminoacyl-tRNA synthetase family. MetG type 1 subfamily.</text>
</comment>
<reference key="1">
    <citation type="submission" date="2007-10" db="EMBL/GenBank/DDBJ databases">
        <title>Complete sequence of Caldivirga maquilingensis IC-167.</title>
        <authorList>
            <consortium name="US DOE Joint Genome Institute"/>
            <person name="Copeland A."/>
            <person name="Lucas S."/>
            <person name="Lapidus A."/>
            <person name="Barry K."/>
            <person name="Glavina del Rio T."/>
            <person name="Dalin E."/>
            <person name="Tice H."/>
            <person name="Pitluck S."/>
            <person name="Saunders E."/>
            <person name="Brettin T."/>
            <person name="Bruce D."/>
            <person name="Detter J.C."/>
            <person name="Han C."/>
            <person name="Schmutz J."/>
            <person name="Larimer F."/>
            <person name="Land M."/>
            <person name="Hauser L."/>
            <person name="Kyrpides N."/>
            <person name="Ivanova N."/>
            <person name="Biddle J.F."/>
            <person name="Zhang Z."/>
            <person name="Fitz-Gibbon S.T."/>
            <person name="Lowe T.M."/>
            <person name="Saltikov C."/>
            <person name="House C.H."/>
            <person name="Richardson P."/>
        </authorList>
    </citation>
    <scope>NUCLEOTIDE SEQUENCE [LARGE SCALE GENOMIC DNA]</scope>
    <source>
        <strain>ATCC 700844 / DSM 13496 / JCM 10307 / IC-167</strain>
    </source>
</reference>
<dbReference type="EC" id="6.1.1.10" evidence="1"/>
<dbReference type="EMBL" id="CP000852">
    <property type="protein sequence ID" value="ABW00986.1"/>
    <property type="molecule type" value="Genomic_DNA"/>
</dbReference>
<dbReference type="RefSeq" id="WP_012185206.1">
    <property type="nucleotide sequence ID" value="NC_009954.1"/>
</dbReference>
<dbReference type="SMR" id="A8MA54"/>
<dbReference type="STRING" id="397948.Cmaq_0136"/>
<dbReference type="GeneID" id="5709876"/>
<dbReference type="KEGG" id="cma:Cmaq_0136"/>
<dbReference type="eggNOG" id="arCOG00810">
    <property type="taxonomic scope" value="Archaea"/>
</dbReference>
<dbReference type="HOGENOM" id="CLU_009710_1_2_2"/>
<dbReference type="OrthoDB" id="371856at2157"/>
<dbReference type="Proteomes" id="UP000001137">
    <property type="component" value="Chromosome"/>
</dbReference>
<dbReference type="GO" id="GO:0017101">
    <property type="term" value="C:aminoacyl-tRNA synthetase multienzyme complex"/>
    <property type="evidence" value="ECO:0007669"/>
    <property type="project" value="TreeGrafter"/>
</dbReference>
<dbReference type="GO" id="GO:0005829">
    <property type="term" value="C:cytosol"/>
    <property type="evidence" value="ECO:0007669"/>
    <property type="project" value="TreeGrafter"/>
</dbReference>
<dbReference type="GO" id="GO:0005524">
    <property type="term" value="F:ATP binding"/>
    <property type="evidence" value="ECO:0007669"/>
    <property type="project" value="UniProtKB-UniRule"/>
</dbReference>
<dbReference type="GO" id="GO:0046872">
    <property type="term" value="F:metal ion binding"/>
    <property type="evidence" value="ECO:0007669"/>
    <property type="project" value="UniProtKB-KW"/>
</dbReference>
<dbReference type="GO" id="GO:0004825">
    <property type="term" value="F:methionine-tRNA ligase activity"/>
    <property type="evidence" value="ECO:0007669"/>
    <property type="project" value="UniProtKB-UniRule"/>
</dbReference>
<dbReference type="GO" id="GO:0006431">
    <property type="term" value="P:methionyl-tRNA aminoacylation"/>
    <property type="evidence" value="ECO:0007669"/>
    <property type="project" value="UniProtKB-UniRule"/>
</dbReference>
<dbReference type="CDD" id="cd07957">
    <property type="entry name" value="Anticodon_Ia_Met"/>
    <property type="match status" value="1"/>
</dbReference>
<dbReference type="CDD" id="cd00814">
    <property type="entry name" value="MetRS_core"/>
    <property type="match status" value="1"/>
</dbReference>
<dbReference type="FunFam" id="2.20.28.20:FF:000001">
    <property type="entry name" value="Methionine--tRNA ligase"/>
    <property type="match status" value="1"/>
</dbReference>
<dbReference type="Gene3D" id="3.40.50.620">
    <property type="entry name" value="HUPs"/>
    <property type="match status" value="1"/>
</dbReference>
<dbReference type="Gene3D" id="1.10.730.10">
    <property type="entry name" value="Isoleucyl-tRNA Synthetase, Domain 1"/>
    <property type="match status" value="1"/>
</dbReference>
<dbReference type="Gene3D" id="2.20.28.20">
    <property type="entry name" value="Methionyl-tRNA synthetase, Zn-domain"/>
    <property type="match status" value="1"/>
</dbReference>
<dbReference type="HAMAP" id="MF_00098">
    <property type="entry name" value="Met_tRNA_synth_type1"/>
    <property type="match status" value="1"/>
</dbReference>
<dbReference type="InterPro" id="IPR041872">
    <property type="entry name" value="Anticodon_Met"/>
</dbReference>
<dbReference type="InterPro" id="IPR023458">
    <property type="entry name" value="Met-tRNA_ligase_1"/>
</dbReference>
<dbReference type="InterPro" id="IPR014758">
    <property type="entry name" value="Met-tRNA_synth"/>
</dbReference>
<dbReference type="InterPro" id="IPR015413">
    <property type="entry name" value="Methionyl/Leucyl_tRNA_Synth"/>
</dbReference>
<dbReference type="InterPro" id="IPR033911">
    <property type="entry name" value="MetRS_core"/>
</dbReference>
<dbReference type="InterPro" id="IPR029038">
    <property type="entry name" value="MetRS_Zn"/>
</dbReference>
<dbReference type="InterPro" id="IPR014729">
    <property type="entry name" value="Rossmann-like_a/b/a_fold"/>
</dbReference>
<dbReference type="InterPro" id="IPR009080">
    <property type="entry name" value="tRNAsynth_Ia_anticodon-bd"/>
</dbReference>
<dbReference type="NCBIfam" id="TIGR00398">
    <property type="entry name" value="metG"/>
    <property type="match status" value="1"/>
</dbReference>
<dbReference type="PANTHER" id="PTHR45765">
    <property type="entry name" value="METHIONINE--TRNA LIGASE"/>
    <property type="match status" value="1"/>
</dbReference>
<dbReference type="PANTHER" id="PTHR45765:SF1">
    <property type="entry name" value="METHIONINE--TRNA LIGASE, CYTOPLASMIC"/>
    <property type="match status" value="1"/>
</dbReference>
<dbReference type="Pfam" id="PF19303">
    <property type="entry name" value="Anticodon_3"/>
    <property type="match status" value="1"/>
</dbReference>
<dbReference type="Pfam" id="PF09334">
    <property type="entry name" value="tRNA-synt_1g"/>
    <property type="match status" value="1"/>
</dbReference>
<dbReference type="PRINTS" id="PR01041">
    <property type="entry name" value="TRNASYNTHMET"/>
</dbReference>
<dbReference type="SUPFAM" id="SSF47323">
    <property type="entry name" value="Anticodon-binding domain of a subclass of class I aminoacyl-tRNA synthetases"/>
    <property type="match status" value="1"/>
</dbReference>
<dbReference type="SUPFAM" id="SSF57770">
    <property type="entry name" value="Methionyl-tRNA synthetase (MetRS), Zn-domain"/>
    <property type="match status" value="1"/>
</dbReference>
<dbReference type="SUPFAM" id="SSF52374">
    <property type="entry name" value="Nucleotidylyl transferase"/>
    <property type="match status" value="1"/>
</dbReference>
<evidence type="ECO:0000255" key="1">
    <source>
        <dbReference type="HAMAP-Rule" id="MF_00098"/>
    </source>
</evidence>
<sequence>MLDRRIFSDPNGNEVRWVVGSAWPYIYAVPHLGNLIGSLLSADVFTRYLKLKGYDVVFVTGSDEHGTPIEVEAIKLGIEPRQLTDRMHEIIVKLLKLWGIEPDNYTRTESEVHKWYVRDAFTKIYNNGYIFTKDDELPYCPRDKIFLPDRFVIGTCPYCGYPYARGDQCENCGRLLEPRMLINPKCAICGSTPEWRLTRHWYLDLRRLEDRIRSYIEGNSALPDNAKQMSLGILKEGLRPRAITRDNKWGIPAPFPGAEGKTIYVWFEAVLGYVSATIEYFRRLGREDDWRRFWFNKGTRVVFFIGKDNIPFHTIIFPALLMATGEDYVMPWTTSSTEYLIFEGKKFSKSQRVGIWADEAIALLPADYWRFYLIYNRPEQRDSNFTWDSFLDVVNSIMNDTVGNFIHRVLTLAKRRWGTVPGDVKMIEQDQEIYGKVLEILNTVEEDYERIMLKDAVSQSIEIARIGNKYLNERQPWRLSEVEFNSAIYMLMSIVKTLSITLAPVIPFSINELWRMMGYSNGLRWGDARKPIEQGLRLSEPKPLFRKISKEELNVMLKKLDEIRDIKDKGKYPWEQAYLPNP</sequence>
<keyword id="KW-0030">Aminoacyl-tRNA synthetase</keyword>
<keyword id="KW-0067">ATP-binding</keyword>
<keyword id="KW-0963">Cytoplasm</keyword>
<keyword id="KW-0436">Ligase</keyword>
<keyword id="KW-0479">Metal-binding</keyword>
<keyword id="KW-0547">Nucleotide-binding</keyword>
<keyword id="KW-0648">Protein biosynthesis</keyword>
<keyword id="KW-1185">Reference proteome</keyword>
<keyword id="KW-0862">Zinc</keyword>